<reference key="1">
    <citation type="journal article" date="1997" name="Nature">
        <title>The complete genome sequence of the Gram-positive bacterium Bacillus subtilis.</title>
        <authorList>
            <person name="Kunst F."/>
            <person name="Ogasawara N."/>
            <person name="Moszer I."/>
            <person name="Albertini A.M."/>
            <person name="Alloni G."/>
            <person name="Azevedo V."/>
            <person name="Bertero M.G."/>
            <person name="Bessieres P."/>
            <person name="Bolotin A."/>
            <person name="Borchert S."/>
            <person name="Borriss R."/>
            <person name="Boursier L."/>
            <person name="Brans A."/>
            <person name="Braun M."/>
            <person name="Brignell S.C."/>
            <person name="Bron S."/>
            <person name="Brouillet S."/>
            <person name="Bruschi C.V."/>
            <person name="Caldwell B."/>
            <person name="Capuano V."/>
            <person name="Carter N.M."/>
            <person name="Choi S.-K."/>
            <person name="Codani J.-J."/>
            <person name="Connerton I.F."/>
            <person name="Cummings N.J."/>
            <person name="Daniel R.A."/>
            <person name="Denizot F."/>
            <person name="Devine K.M."/>
            <person name="Duesterhoeft A."/>
            <person name="Ehrlich S.D."/>
            <person name="Emmerson P.T."/>
            <person name="Entian K.-D."/>
            <person name="Errington J."/>
            <person name="Fabret C."/>
            <person name="Ferrari E."/>
            <person name="Foulger D."/>
            <person name="Fritz C."/>
            <person name="Fujita M."/>
            <person name="Fujita Y."/>
            <person name="Fuma S."/>
            <person name="Galizzi A."/>
            <person name="Galleron N."/>
            <person name="Ghim S.-Y."/>
            <person name="Glaser P."/>
            <person name="Goffeau A."/>
            <person name="Golightly E.J."/>
            <person name="Grandi G."/>
            <person name="Guiseppi G."/>
            <person name="Guy B.J."/>
            <person name="Haga K."/>
            <person name="Haiech J."/>
            <person name="Harwood C.R."/>
            <person name="Henaut A."/>
            <person name="Hilbert H."/>
            <person name="Holsappel S."/>
            <person name="Hosono S."/>
            <person name="Hullo M.-F."/>
            <person name="Itaya M."/>
            <person name="Jones L.-M."/>
            <person name="Joris B."/>
            <person name="Karamata D."/>
            <person name="Kasahara Y."/>
            <person name="Klaerr-Blanchard M."/>
            <person name="Klein C."/>
            <person name="Kobayashi Y."/>
            <person name="Koetter P."/>
            <person name="Koningstein G."/>
            <person name="Krogh S."/>
            <person name="Kumano M."/>
            <person name="Kurita K."/>
            <person name="Lapidus A."/>
            <person name="Lardinois S."/>
            <person name="Lauber J."/>
            <person name="Lazarevic V."/>
            <person name="Lee S.-M."/>
            <person name="Levine A."/>
            <person name="Liu H."/>
            <person name="Masuda S."/>
            <person name="Mauel C."/>
            <person name="Medigue C."/>
            <person name="Medina N."/>
            <person name="Mellado R.P."/>
            <person name="Mizuno M."/>
            <person name="Moestl D."/>
            <person name="Nakai S."/>
            <person name="Noback M."/>
            <person name="Noone D."/>
            <person name="O'Reilly M."/>
            <person name="Ogawa K."/>
            <person name="Ogiwara A."/>
            <person name="Oudega B."/>
            <person name="Park S.-H."/>
            <person name="Parro V."/>
            <person name="Pohl T.M."/>
            <person name="Portetelle D."/>
            <person name="Porwollik S."/>
            <person name="Prescott A.M."/>
            <person name="Presecan E."/>
            <person name="Pujic P."/>
            <person name="Purnelle B."/>
            <person name="Rapoport G."/>
            <person name="Rey M."/>
            <person name="Reynolds S."/>
            <person name="Rieger M."/>
            <person name="Rivolta C."/>
            <person name="Rocha E."/>
            <person name="Roche B."/>
            <person name="Rose M."/>
            <person name="Sadaie Y."/>
            <person name="Sato T."/>
            <person name="Scanlan E."/>
            <person name="Schleich S."/>
            <person name="Schroeter R."/>
            <person name="Scoffone F."/>
            <person name="Sekiguchi J."/>
            <person name="Sekowska A."/>
            <person name="Seror S.J."/>
            <person name="Serror P."/>
            <person name="Shin B.-S."/>
            <person name="Soldo B."/>
            <person name="Sorokin A."/>
            <person name="Tacconi E."/>
            <person name="Takagi T."/>
            <person name="Takahashi H."/>
            <person name="Takemaru K."/>
            <person name="Takeuchi M."/>
            <person name="Tamakoshi A."/>
            <person name="Tanaka T."/>
            <person name="Terpstra P."/>
            <person name="Tognoni A."/>
            <person name="Tosato V."/>
            <person name="Uchiyama S."/>
            <person name="Vandenbol M."/>
            <person name="Vannier F."/>
            <person name="Vassarotti A."/>
            <person name="Viari A."/>
            <person name="Wambutt R."/>
            <person name="Wedler E."/>
            <person name="Wedler H."/>
            <person name="Weitzenegger T."/>
            <person name="Winters P."/>
            <person name="Wipat A."/>
            <person name="Yamamoto H."/>
            <person name="Yamane K."/>
            <person name="Yasumoto K."/>
            <person name="Yata K."/>
            <person name="Yoshida K."/>
            <person name="Yoshikawa H.-F."/>
            <person name="Zumstein E."/>
            <person name="Yoshikawa H."/>
            <person name="Danchin A."/>
        </authorList>
    </citation>
    <scope>NUCLEOTIDE SEQUENCE [LARGE SCALE GENOMIC DNA]</scope>
    <source>
        <strain>168</strain>
    </source>
</reference>
<reference key="2">
    <citation type="journal article" date="2009" name="Microbiology">
        <title>From a consortium sequence to a unified sequence: the Bacillus subtilis 168 reference genome a decade later.</title>
        <authorList>
            <person name="Barbe V."/>
            <person name="Cruveiller S."/>
            <person name="Kunst F."/>
            <person name="Lenoble P."/>
            <person name="Meurice G."/>
            <person name="Sekowska A."/>
            <person name="Vallenet D."/>
            <person name="Wang T."/>
            <person name="Moszer I."/>
            <person name="Medigue C."/>
            <person name="Danchin A."/>
        </authorList>
    </citation>
    <scope>SEQUENCE REVISION TO 136</scope>
</reference>
<dbReference type="EMBL" id="AL009126">
    <property type="protein sequence ID" value="CAB14424.2"/>
    <property type="molecule type" value="Genomic_DNA"/>
</dbReference>
<dbReference type="PIR" id="B69969">
    <property type="entry name" value="B69969"/>
</dbReference>
<dbReference type="RefSeq" id="NP_390373.2">
    <property type="nucleotide sequence ID" value="NC_000964.3"/>
</dbReference>
<dbReference type="RefSeq" id="WP_003230109.1">
    <property type="nucleotide sequence ID" value="NZ_OZ025638.1"/>
</dbReference>
<dbReference type="SMR" id="O32023"/>
<dbReference type="FunCoup" id="O32023">
    <property type="interactions" value="62"/>
</dbReference>
<dbReference type="STRING" id="224308.BSU24940"/>
<dbReference type="jPOST" id="O32023"/>
<dbReference type="PaxDb" id="224308-BSU24940"/>
<dbReference type="EnsemblBacteria" id="CAB14424">
    <property type="protein sequence ID" value="CAB14424"/>
    <property type="gene ID" value="BSU_24940"/>
</dbReference>
<dbReference type="GeneID" id="938202"/>
<dbReference type="KEGG" id="bsu:BSU24940"/>
<dbReference type="PATRIC" id="fig|224308.179.peg.2713"/>
<dbReference type="eggNOG" id="COG1559">
    <property type="taxonomic scope" value="Bacteria"/>
</dbReference>
<dbReference type="InParanoid" id="O32023"/>
<dbReference type="OrthoDB" id="2138957at2"/>
<dbReference type="BioCyc" id="BSUB:BSU24940-MONOMER"/>
<dbReference type="Proteomes" id="UP000001570">
    <property type="component" value="Chromosome"/>
</dbReference>
<dbReference type="Gene3D" id="3.30.1490.480">
    <property type="entry name" value="Endolytic murein transglycosylase"/>
    <property type="match status" value="1"/>
</dbReference>
<dbReference type="InterPro" id="IPR003770">
    <property type="entry name" value="MLTG-like"/>
</dbReference>
<dbReference type="Pfam" id="PF02618">
    <property type="entry name" value="YceG"/>
    <property type="match status" value="1"/>
</dbReference>
<accession>O32023</accession>
<keyword id="KW-1185">Reference proteome</keyword>
<keyword id="KW-0732">Signal</keyword>
<proteinExistence type="inferred from homology"/>
<feature type="signal peptide" evidence="1">
    <location>
        <begin position="1"/>
        <end position="33"/>
    </location>
</feature>
<feature type="chain" id="PRO_0000360720" description="Uncharacterized protein YqzC">
    <location>
        <begin position="34"/>
        <end position="154"/>
    </location>
</feature>
<protein>
    <recommendedName>
        <fullName>Uncharacterized protein YqzC</fullName>
    </recommendedName>
</protein>
<sequence length="154" mass="17027">MTKRGIQAFAGGIILATAVLAAVFYLTDEDQAAAVKDNKTVTEQDVNNYLDSKKLVSVNRDEYQKLLDSKEKSLNNDSGSDTKSDKVKTYKLTIKDGMSTADVSAILEKEGIISSAQDFNDYVIDAGYHKEIRAGEFKVKSDMSFKKIVKTLTR</sequence>
<organism>
    <name type="scientific">Bacillus subtilis (strain 168)</name>
    <dbReference type="NCBI Taxonomy" id="224308"/>
    <lineage>
        <taxon>Bacteria</taxon>
        <taxon>Bacillati</taxon>
        <taxon>Bacillota</taxon>
        <taxon>Bacilli</taxon>
        <taxon>Bacillales</taxon>
        <taxon>Bacillaceae</taxon>
        <taxon>Bacillus</taxon>
    </lineage>
</organism>
<name>YQZC_BACSU</name>
<evidence type="ECO:0000255" key="1"/>
<gene>
    <name type="primary">yqzC</name>
    <name type="ordered locus">BSU24940</name>
</gene>